<accession>F4JN35</accession>
<accession>O81790</accession>
<accession>Q93ZN0</accession>
<evidence type="ECO:0000255" key="1"/>
<evidence type="ECO:0000255" key="2">
    <source>
        <dbReference type="PROSITE-ProRule" id="PRU00353"/>
    </source>
</evidence>
<evidence type="ECO:0000256" key="3">
    <source>
        <dbReference type="SAM" id="MobiDB-lite"/>
    </source>
</evidence>
<evidence type="ECO:0000269" key="4">
    <source>
    </source>
</evidence>
<evidence type="ECO:0000269" key="5">
    <source>
    </source>
</evidence>
<evidence type="ECO:0000269" key="6">
    <source>
    </source>
</evidence>
<evidence type="ECO:0000269" key="7">
    <source>
    </source>
</evidence>
<evidence type="ECO:0000269" key="8">
    <source>
    </source>
</evidence>
<evidence type="ECO:0000303" key="9">
    <source>
    </source>
</evidence>
<evidence type="ECO:0000303" key="10">
    <source>
    </source>
</evidence>
<evidence type="ECO:0000305" key="11"/>
<evidence type="ECO:0000312" key="12">
    <source>
        <dbReference type="Araport" id="AT4G35580"/>
    </source>
</evidence>
<evidence type="ECO:0000312" key="13">
    <source>
        <dbReference type="EMBL" id="CAA20028.1"/>
    </source>
</evidence>
<sequence>MGAVSMESLPLGFRFRPTDEELVNHYLRLKINGRHSDVRVIPDIDVCKWEPWDLPALSVIKTDDPEWFFFCPRDRKYPNGHRSNRATDSGYWKATGKDRSIKSKKTLIGMKKTLVFYRGRAPKGERTNWIMHEYRPTLKDLDGTSPGQSPYVLCRLFHKPDDRVNGVKSDEAAFTASNKYSPDDTSSDLVQETPSSDAAVEKPSDYSGGCGYAHSNSTADGTMIEAPEENLWLSCDLEDQKAPLPCMDSIYAGDFSYDEIGFQFQDGTSEPDVSLTELLEEVFNNPDDFSCEESISRENPAVSPNGIFSSAKMLQSAAPEDAFFNDFMAFTDTDAEMAQLQYGSEGGASGWPSDTNSYYSDLVQQEQMINHNTENNLTEGRGIKIRARQPQNRQSTGLINQGIAPRRIRLQLQSNSEVKEREEVNEGHTVIPEAKEAAAKYSEKSGSLVKPQIKLRARGTIGQVKGERFADDEVQVQSRKRRGGKRWKVVATVMVAVMVGVGMGIWRTLVSS</sequence>
<feature type="chain" id="PRO_0000432447" description="Protein NTM1-like 9">
    <location>
        <begin position="1"/>
        <end position="512"/>
    </location>
</feature>
<feature type="transmembrane region" description="Helical" evidence="1">
    <location>
        <begin position="489"/>
        <end position="511"/>
    </location>
</feature>
<feature type="domain" description="NAC" evidence="2">
    <location>
        <begin position="9"/>
        <end position="159"/>
    </location>
</feature>
<feature type="DNA-binding region" evidence="2">
    <location>
        <begin position="108"/>
        <end position="165"/>
    </location>
</feature>
<feature type="region of interest" description="Disordered" evidence="3">
    <location>
        <begin position="175"/>
        <end position="204"/>
    </location>
</feature>
<feature type="compositionally biased region" description="Polar residues" evidence="3">
    <location>
        <begin position="175"/>
        <end position="196"/>
    </location>
</feature>
<feature type="mutagenesis site" description="Loss of binding to calmodulin." evidence="5">
    <original>W</original>
    <variation>R</variation>
    <location>
        <position position="487"/>
    </location>
</feature>
<feature type="mutagenesis site" description="No effect on binding to calmodulin." evidence="5">
    <original>A</original>
    <variation>R</variation>
    <location>
        <position position="491"/>
    </location>
</feature>
<feature type="mutagenesis site" description="No effect on binding to calmodulin." evidence="5">
    <original>A</original>
    <variation>R</variation>
    <location>
        <position position="496"/>
    </location>
</feature>
<feature type="sequence conflict" description="In Ref. 3; AAL08299/AAL87369." evidence="11" ref="3">
    <original>A</original>
    <variation>V</variation>
    <location>
        <position position="457"/>
    </location>
</feature>
<proteinExistence type="evidence at protein level"/>
<keyword id="KW-0010">Activator</keyword>
<keyword id="KW-0025">Alternative splicing</keyword>
<keyword id="KW-0112">Calmodulin-binding</keyword>
<keyword id="KW-1003">Cell membrane</keyword>
<keyword id="KW-0238">DNA-binding</keyword>
<keyword id="KW-0256">Endoplasmic reticulum</keyword>
<keyword id="KW-0472">Membrane</keyword>
<keyword id="KW-0539">Nucleus</keyword>
<keyword id="KW-1185">Reference proteome</keyword>
<keyword id="KW-0678">Repressor</keyword>
<keyword id="KW-0346">Stress response</keyword>
<keyword id="KW-0804">Transcription</keyword>
<keyword id="KW-0805">Transcription regulation</keyword>
<keyword id="KW-0812">Transmembrane</keyword>
<keyword id="KW-1133">Transmembrane helix</keyword>
<gene>
    <name evidence="9" type="primary">NTL9</name>
    <name evidence="10" type="synonym">CBNAC</name>
    <name evidence="12" type="ordered locus">At4g35580</name>
    <name evidence="13" type="ORF">F8D20.90</name>
</gene>
<comment type="function">
    <text evidence="5 6 7 8">Transcriptional activator activated by proteolytic cleavage through regulated intramembrane proteolysis (RIP) (PubMed:18443413, PubMed:24329768). Calmodulin-regulated transcriptional repressor. Binds several synthetic promoters with randomly selected binding sites (PubMed:17947243). Functions synergistically with SNI1 as negative regulator of pathogen-induced PR1 expression and basal resistance to a virulent strain of P.syringae. Binds directly to the promoter of the PR1 gene (PubMed:22826500). Acts as a positive regulator of innate immunity. Involved in the effector-triggered immunity (ETI) induction of immunity-related gene expression (PubMed:24329768). Mediates osmotic stress signaling in leaf senescence by up-regulating senescence-associated genes (PubMed:18443413).</text>
</comment>
<comment type="subunit">
    <text evidence="5 7">Interacts with calmodulin (CaM) (PubMed:17947243). Interacts with SNI1 (PubMed:22826500).</text>
</comment>
<comment type="interaction">
    <interactant intactId="EBI-4426607">
        <id>F4JN35</id>
    </interactant>
    <interactant intactId="EBI-25516740">
        <id>Q9FI23</id>
        <label>PDF1.2A</label>
    </interactant>
    <organismsDiffer>false</organismsDiffer>
    <experiments>3</experiments>
</comment>
<comment type="interaction">
    <interactant intactId="EBI-4426607">
        <id>F4JN35</id>
    </interactant>
    <interactant intactId="EBI-25522494">
        <id>O80995</id>
        <label>PDF1.3</label>
    </interactant>
    <organismsDiffer>false</organismsDiffer>
    <experiments>3</experiments>
</comment>
<comment type="subcellular location">
    <subcellularLocation>
        <location evidence="6">Cell membrane</location>
        <topology evidence="1">Single-pass membrane protein</topology>
    </subcellularLocation>
    <subcellularLocation>
        <location evidence="8">Endoplasmic reticulum membrane</location>
        <topology evidence="1">Single-pass membrane protein</topology>
    </subcellularLocation>
    <subcellularLocation>
        <location evidence="2 5 6">Nucleus</location>
    </subcellularLocation>
    <text evidence="6 8">Localized primarily in plasma membrane or endoplasmic reticulum membrane as dormant form and, upon osmotic stress or pathogen attack, is processed into a transcriptionally active and nuclear form after a proteolytic cleavage through regulated intramembrane proteolysis (RIP).</text>
</comment>
<comment type="alternative products">
    <event type="alternative splicing"/>
    <isoform>
        <id>F4JN35-1</id>
        <name>1</name>
        <sequence type="displayed"/>
    </isoform>
    <text evidence="11">A number of isoforms are produced. According to EST sequences.</text>
</comment>
<comment type="tissue specificity">
    <text evidence="4 6">Expressed in roots, rosette leaves, cauline leaves, shoot apex, stems and flowers (PubMed:17158162). Expressed in guard cells (PubMed:18443413).</text>
</comment>
<comment type="developmental stage">
    <text evidence="6">Induced during normal senescence.</text>
</comment>
<comment type="domain">
    <text evidence="2">The NAC domain includes a DNA binding domain and a dimerization domain.</text>
</comment>
<comment type="disruption phenotype">
    <text evidence="6 7">No visible phenotype under normal growth conditions (PubMed:18443413, PubMed:22826500). Mutant plants display enhanced resistance to the bacterial pathogen P.syringae pv. tomato DC3000 (PubMed:22826500).</text>
</comment>
<comment type="sequence caution" evidence="11">
    <conflict type="erroneous gene model prediction">
        <sequence resource="EMBL-CDS" id="AEE86534"/>
    </conflict>
</comment>
<comment type="sequence caution" evidence="11">
    <conflict type="erroneous gene model prediction">
        <sequence resource="EMBL-CDS" id="CAA20028"/>
    </conflict>
</comment>
<comment type="sequence caution" evidence="11">
    <conflict type="erroneous gene model prediction">
        <sequence resource="EMBL-CDS" id="CAB80274"/>
    </conflict>
</comment>
<dbReference type="EMBL" id="AL031135">
    <property type="protein sequence ID" value="CAA20028.1"/>
    <property type="status" value="ALT_SEQ"/>
    <property type="molecule type" value="Genomic_DNA"/>
</dbReference>
<dbReference type="EMBL" id="AL161587">
    <property type="protein sequence ID" value="CAB80274.1"/>
    <property type="status" value="ALT_SEQ"/>
    <property type="molecule type" value="Genomic_DNA"/>
</dbReference>
<dbReference type="EMBL" id="CP002687">
    <property type="protein sequence ID" value="AEE86533.1"/>
    <property type="molecule type" value="Genomic_DNA"/>
</dbReference>
<dbReference type="EMBL" id="CP002687">
    <property type="protein sequence ID" value="AEE86534.1"/>
    <property type="status" value="ALT_SEQ"/>
    <property type="molecule type" value="Genomic_DNA"/>
</dbReference>
<dbReference type="EMBL" id="AY056443">
    <property type="protein sequence ID" value="AAL08299.1"/>
    <property type="molecule type" value="mRNA"/>
</dbReference>
<dbReference type="EMBL" id="AY081716">
    <property type="protein sequence ID" value="AAL87369.1"/>
    <property type="molecule type" value="mRNA"/>
</dbReference>
<dbReference type="PIR" id="T04663">
    <property type="entry name" value="T04663"/>
</dbReference>
<dbReference type="RefSeq" id="NP_001119122.1">
    <property type="nucleotide sequence ID" value="NM_001125650.1"/>
</dbReference>
<dbReference type="RefSeq" id="NP_567986.3">
    <molecule id="F4JN35-1"/>
    <property type="nucleotide sequence ID" value="NM_119723.5"/>
</dbReference>
<dbReference type="SMR" id="F4JN35"/>
<dbReference type="FunCoup" id="F4JN35">
    <property type="interactions" value="1093"/>
</dbReference>
<dbReference type="IntAct" id="F4JN35">
    <property type="interactions" value="168"/>
</dbReference>
<dbReference type="STRING" id="3702.F4JN35"/>
<dbReference type="iPTMnet" id="F4JN35"/>
<dbReference type="PaxDb" id="3702-AT4G35580.2"/>
<dbReference type="ProteomicsDB" id="249181">
    <molecule id="F4JN35-1"/>
</dbReference>
<dbReference type="EnsemblPlants" id="AT4G35580.1">
    <molecule id="F4JN35-1"/>
    <property type="protein sequence ID" value="AT4G35580.1"/>
    <property type="gene ID" value="AT4G35580"/>
</dbReference>
<dbReference type="GeneID" id="829710"/>
<dbReference type="Gramene" id="AT4G35580.1">
    <molecule id="F4JN35-1"/>
    <property type="protein sequence ID" value="AT4G35580.1"/>
    <property type="gene ID" value="AT4G35580"/>
</dbReference>
<dbReference type="KEGG" id="ath:AT4G35580"/>
<dbReference type="Araport" id="AT4G35580"/>
<dbReference type="TAIR" id="AT4G35580">
    <property type="gene designation" value="NTL9"/>
</dbReference>
<dbReference type="eggNOG" id="ENOG502QQI4">
    <property type="taxonomic scope" value="Eukaryota"/>
</dbReference>
<dbReference type="HOGENOM" id="CLU_016524_1_0_1"/>
<dbReference type="InParanoid" id="F4JN35"/>
<dbReference type="OrthoDB" id="737278at2759"/>
<dbReference type="PRO" id="PR:F4JN35"/>
<dbReference type="Proteomes" id="UP000006548">
    <property type="component" value="Chromosome 4"/>
</dbReference>
<dbReference type="ExpressionAtlas" id="F4JN35">
    <property type="expression patterns" value="baseline and differential"/>
</dbReference>
<dbReference type="GO" id="GO:0005789">
    <property type="term" value="C:endoplasmic reticulum membrane"/>
    <property type="evidence" value="ECO:0000314"/>
    <property type="project" value="UniProtKB"/>
</dbReference>
<dbReference type="GO" id="GO:0005634">
    <property type="term" value="C:nucleus"/>
    <property type="evidence" value="ECO:0000314"/>
    <property type="project" value="UniProtKB"/>
</dbReference>
<dbReference type="GO" id="GO:0005886">
    <property type="term" value="C:plasma membrane"/>
    <property type="evidence" value="ECO:0000314"/>
    <property type="project" value="UniProtKB"/>
</dbReference>
<dbReference type="GO" id="GO:0005516">
    <property type="term" value="F:calmodulin binding"/>
    <property type="evidence" value="ECO:0000314"/>
    <property type="project" value="UniProtKB"/>
</dbReference>
<dbReference type="GO" id="GO:0003700">
    <property type="term" value="F:DNA-binding transcription factor activity"/>
    <property type="evidence" value="ECO:0000314"/>
    <property type="project" value="TAIR"/>
</dbReference>
<dbReference type="GO" id="GO:0000976">
    <property type="term" value="F:transcription cis-regulatory region binding"/>
    <property type="evidence" value="ECO:0000314"/>
    <property type="project" value="UniProtKB"/>
</dbReference>
<dbReference type="GO" id="GO:0071470">
    <property type="term" value="P:cellular response to osmotic stress"/>
    <property type="evidence" value="ECO:0000314"/>
    <property type="project" value="UniProtKB"/>
</dbReference>
<dbReference type="GO" id="GO:0045892">
    <property type="term" value="P:negative regulation of DNA-templated transcription"/>
    <property type="evidence" value="ECO:0000314"/>
    <property type="project" value="UniProtKB"/>
</dbReference>
<dbReference type="GO" id="GO:1900426">
    <property type="term" value="P:positive regulation of defense response to bacterium"/>
    <property type="evidence" value="ECO:0000315"/>
    <property type="project" value="UniProtKB"/>
</dbReference>
<dbReference type="GO" id="GO:0031347">
    <property type="term" value="P:regulation of defense response"/>
    <property type="evidence" value="ECO:0000315"/>
    <property type="project" value="TAIR"/>
</dbReference>
<dbReference type="GO" id="GO:0006355">
    <property type="term" value="P:regulation of DNA-templated transcription"/>
    <property type="evidence" value="ECO:0000304"/>
    <property type="project" value="TAIR"/>
</dbReference>
<dbReference type="FunFam" id="2.170.150.80:FF:000002">
    <property type="entry name" value="Nac domain-containing protein 86"/>
    <property type="match status" value="1"/>
</dbReference>
<dbReference type="Gene3D" id="2.170.150.80">
    <property type="entry name" value="NAC domain"/>
    <property type="match status" value="1"/>
</dbReference>
<dbReference type="InterPro" id="IPR003441">
    <property type="entry name" value="NAC-dom"/>
</dbReference>
<dbReference type="InterPro" id="IPR036093">
    <property type="entry name" value="NAC_dom_sf"/>
</dbReference>
<dbReference type="PANTHER" id="PTHR31744:SF216">
    <property type="entry name" value="NAC TRANSCRIPTION FACTOR"/>
    <property type="match status" value="1"/>
</dbReference>
<dbReference type="PANTHER" id="PTHR31744">
    <property type="entry name" value="PROTEIN CUP-SHAPED COTYLEDON 2-RELATED"/>
    <property type="match status" value="1"/>
</dbReference>
<dbReference type="Pfam" id="PF02365">
    <property type="entry name" value="NAM"/>
    <property type="match status" value="1"/>
</dbReference>
<dbReference type="SUPFAM" id="SSF101941">
    <property type="entry name" value="NAC domain"/>
    <property type="match status" value="1"/>
</dbReference>
<dbReference type="PROSITE" id="PS51005">
    <property type="entry name" value="NAC"/>
    <property type="match status" value="1"/>
</dbReference>
<protein>
    <recommendedName>
        <fullName evidence="9">Protein NTM1-like 9</fullName>
    </recommendedName>
    <alternativeName>
        <fullName evidence="10">Calmodulin-binding NAC protein</fullName>
    </alternativeName>
</protein>
<reference key="1">
    <citation type="journal article" date="1999" name="Nature">
        <title>Sequence and analysis of chromosome 4 of the plant Arabidopsis thaliana.</title>
        <authorList>
            <person name="Mayer K.F.X."/>
            <person name="Schueller C."/>
            <person name="Wambutt R."/>
            <person name="Murphy G."/>
            <person name="Volckaert G."/>
            <person name="Pohl T."/>
            <person name="Duesterhoeft A."/>
            <person name="Stiekema W."/>
            <person name="Entian K.-D."/>
            <person name="Terryn N."/>
            <person name="Harris B."/>
            <person name="Ansorge W."/>
            <person name="Brandt P."/>
            <person name="Grivell L.A."/>
            <person name="Rieger M."/>
            <person name="Weichselgartner M."/>
            <person name="de Simone V."/>
            <person name="Obermaier B."/>
            <person name="Mache R."/>
            <person name="Mueller M."/>
            <person name="Kreis M."/>
            <person name="Delseny M."/>
            <person name="Puigdomenech P."/>
            <person name="Watson M."/>
            <person name="Schmidtheini T."/>
            <person name="Reichert B."/>
            <person name="Portetelle D."/>
            <person name="Perez-Alonso M."/>
            <person name="Boutry M."/>
            <person name="Bancroft I."/>
            <person name="Vos P."/>
            <person name="Hoheisel J."/>
            <person name="Zimmermann W."/>
            <person name="Wedler H."/>
            <person name="Ridley P."/>
            <person name="Langham S.-A."/>
            <person name="McCullagh B."/>
            <person name="Bilham L."/>
            <person name="Robben J."/>
            <person name="van der Schueren J."/>
            <person name="Grymonprez B."/>
            <person name="Chuang Y.-J."/>
            <person name="Vandenbussche F."/>
            <person name="Braeken M."/>
            <person name="Weltjens I."/>
            <person name="Voet M."/>
            <person name="Bastiaens I."/>
            <person name="Aert R."/>
            <person name="Defoor E."/>
            <person name="Weitzenegger T."/>
            <person name="Bothe G."/>
            <person name="Ramsperger U."/>
            <person name="Hilbert H."/>
            <person name="Braun M."/>
            <person name="Holzer E."/>
            <person name="Brandt A."/>
            <person name="Peters S."/>
            <person name="van Staveren M."/>
            <person name="Dirkse W."/>
            <person name="Mooijman P."/>
            <person name="Klein Lankhorst R."/>
            <person name="Rose M."/>
            <person name="Hauf J."/>
            <person name="Koetter P."/>
            <person name="Berneiser S."/>
            <person name="Hempel S."/>
            <person name="Feldpausch M."/>
            <person name="Lamberth S."/>
            <person name="Van den Daele H."/>
            <person name="De Keyser A."/>
            <person name="Buysshaert C."/>
            <person name="Gielen J."/>
            <person name="Villarroel R."/>
            <person name="De Clercq R."/>
            <person name="van Montagu M."/>
            <person name="Rogers J."/>
            <person name="Cronin A."/>
            <person name="Quail M.A."/>
            <person name="Bray-Allen S."/>
            <person name="Clark L."/>
            <person name="Doggett J."/>
            <person name="Hall S."/>
            <person name="Kay M."/>
            <person name="Lennard N."/>
            <person name="McLay K."/>
            <person name="Mayes R."/>
            <person name="Pettett A."/>
            <person name="Rajandream M.A."/>
            <person name="Lyne M."/>
            <person name="Benes V."/>
            <person name="Rechmann S."/>
            <person name="Borkova D."/>
            <person name="Bloecker H."/>
            <person name="Scharfe M."/>
            <person name="Grimm M."/>
            <person name="Loehnert T.-H."/>
            <person name="Dose S."/>
            <person name="de Haan M."/>
            <person name="Maarse A.C."/>
            <person name="Schaefer M."/>
            <person name="Mueller-Auer S."/>
            <person name="Gabel C."/>
            <person name="Fuchs M."/>
            <person name="Fartmann B."/>
            <person name="Granderath K."/>
            <person name="Dauner D."/>
            <person name="Herzl A."/>
            <person name="Neumann S."/>
            <person name="Argiriou A."/>
            <person name="Vitale D."/>
            <person name="Liguori R."/>
            <person name="Piravandi E."/>
            <person name="Massenet O."/>
            <person name="Quigley F."/>
            <person name="Clabauld G."/>
            <person name="Muendlein A."/>
            <person name="Felber R."/>
            <person name="Schnabl S."/>
            <person name="Hiller R."/>
            <person name="Schmidt W."/>
            <person name="Lecharny A."/>
            <person name="Aubourg S."/>
            <person name="Chefdor F."/>
            <person name="Cooke R."/>
            <person name="Berger C."/>
            <person name="Monfort A."/>
            <person name="Casacuberta E."/>
            <person name="Gibbons T."/>
            <person name="Weber N."/>
            <person name="Vandenbol M."/>
            <person name="Bargues M."/>
            <person name="Terol J."/>
            <person name="Torres A."/>
            <person name="Perez-Perez A."/>
            <person name="Purnelle B."/>
            <person name="Bent E."/>
            <person name="Johnson S."/>
            <person name="Tacon D."/>
            <person name="Jesse T."/>
            <person name="Heijnen L."/>
            <person name="Schwarz S."/>
            <person name="Scholler P."/>
            <person name="Heber S."/>
            <person name="Francs P."/>
            <person name="Bielke C."/>
            <person name="Frishman D."/>
            <person name="Haase D."/>
            <person name="Lemcke K."/>
            <person name="Mewes H.-W."/>
            <person name="Stocker S."/>
            <person name="Zaccaria P."/>
            <person name="Bevan M."/>
            <person name="Wilson R.K."/>
            <person name="de la Bastide M."/>
            <person name="Habermann K."/>
            <person name="Parnell L."/>
            <person name="Dedhia N."/>
            <person name="Gnoj L."/>
            <person name="Schutz K."/>
            <person name="Huang E."/>
            <person name="Spiegel L."/>
            <person name="Sekhon M."/>
            <person name="Murray J."/>
            <person name="Sheet P."/>
            <person name="Cordes M."/>
            <person name="Abu-Threideh J."/>
            <person name="Stoneking T."/>
            <person name="Kalicki J."/>
            <person name="Graves T."/>
            <person name="Harmon G."/>
            <person name="Edwards J."/>
            <person name="Latreille P."/>
            <person name="Courtney L."/>
            <person name="Cloud J."/>
            <person name="Abbott A."/>
            <person name="Scott K."/>
            <person name="Johnson D."/>
            <person name="Minx P."/>
            <person name="Bentley D."/>
            <person name="Fulton B."/>
            <person name="Miller N."/>
            <person name="Greco T."/>
            <person name="Kemp K."/>
            <person name="Kramer J."/>
            <person name="Fulton L."/>
            <person name="Mardis E."/>
            <person name="Dante M."/>
            <person name="Pepin K."/>
            <person name="Hillier L.W."/>
            <person name="Nelson J."/>
            <person name="Spieth J."/>
            <person name="Ryan E."/>
            <person name="Andrews S."/>
            <person name="Geisel C."/>
            <person name="Layman D."/>
            <person name="Du H."/>
            <person name="Ali J."/>
            <person name="Berghoff A."/>
            <person name="Jones K."/>
            <person name="Drone K."/>
            <person name="Cotton M."/>
            <person name="Joshu C."/>
            <person name="Antonoiu B."/>
            <person name="Zidanic M."/>
            <person name="Strong C."/>
            <person name="Sun H."/>
            <person name="Lamar B."/>
            <person name="Yordan C."/>
            <person name="Ma P."/>
            <person name="Zhong J."/>
            <person name="Preston R."/>
            <person name="Vil D."/>
            <person name="Shekher M."/>
            <person name="Matero A."/>
            <person name="Shah R."/>
            <person name="Swaby I.K."/>
            <person name="O'Shaughnessy A."/>
            <person name="Rodriguez M."/>
            <person name="Hoffman J."/>
            <person name="Till S."/>
            <person name="Granat S."/>
            <person name="Shohdy N."/>
            <person name="Hasegawa A."/>
            <person name="Hameed A."/>
            <person name="Lodhi M."/>
            <person name="Johnson A."/>
            <person name="Chen E."/>
            <person name="Marra M.A."/>
            <person name="Martienssen R."/>
            <person name="McCombie W.R."/>
        </authorList>
    </citation>
    <scope>NUCLEOTIDE SEQUENCE [LARGE SCALE GENOMIC DNA]</scope>
    <source>
        <strain>cv. Columbia</strain>
    </source>
</reference>
<reference key="2">
    <citation type="journal article" date="2017" name="Plant J.">
        <title>Araport11: a complete reannotation of the Arabidopsis thaliana reference genome.</title>
        <authorList>
            <person name="Cheng C.Y."/>
            <person name="Krishnakumar V."/>
            <person name="Chan A.P."/>
            <person name="Thibaud-Nissen F."/>
            <person name="Schobel S."/>
            <person name="Town C.D."/>
        </authorList>
    </citation>
    <scope>GENOME REANNOTATION</scope>
    <source>
        <strain>cv. Columbia</strain>
    </source>
</reference>
<reference key="3">
    <citation type="journal article" date="2003" name="Science">
        <title>Empirical analysis of transcriptional activity in the Arabidopsis genome.</title>
        <authorList>
            <person name="Yamada K."/>
            <person name="Lim J."/>
            <person name="Dale J.M."/>
            <person name="Chen H."/>
            <person name="Shinn P."/>
            <person name="Palm C.J."/>
            <person name="Southwick A.M."/>
            <person name="Wu H.C."/>
            <person name="Kim C.J."/>
            <person name="Nguyen M."/>
            <person name="Pham P.K."/>
            <person name="Cheuk R.F."/>
            <person name="Karlin-Newmann G."/>
            <person name="Liu S.X."/>
            <person name="Lam B."/>
            <person name="Sakano H."/>
            <person name="Wu T."/>
            <person name="Yu G."/>
            <person name="Miranda M."/>
            <person name="Quach H.L."/>
            <person name="Tripp M."/>
            <person name="Chang C.H."/>
            <person name="Lee J.M."/>
            <person name="Toriumi M.J."/>
            <person name="Chan M.M."/>
            <person name="Tang C.C."/>
            <person name="Onodera C.S."/>
            <person name="Deng J.M."/>
            <person name="Akiyama K."/>
            <person name="Ansari Y."/>
            <person name="Arakawa T."/>
            <person name="Banh J."/>
            <person name="Banno F."/>
            <person name="Bowser L."/>
            <person name="Brooks S.Y."/>
            <person name="Carninci P."/>
            <person name="Chao Q."/>
            <person name="Choy N."/>
            <person name="Enju A."/>
            <person name="Goldsmith A.D."/>
            <person name="Gurjal M."/>
            <person name="Hansen N.F."/>
            <person name="Hayashizaki Y."/>
            <person name="Johnson-Hopson C."/>
            <person name="Hsuan V.W."/>
            <person name="Iida K."/>
            <person name="Karnes M."/>
            <person name="Khan S."/>
            <person name="Koesema E."/>
            <person name="Ishida J."/>
            <person name="Jiang P.X."/>
            <person name="Jones T."/>
            <person name="Kawai J."/>
            <person name="Kamiya A."/>
            <person name="Meyers C."/>
            <person name="Nakajima M."/>
            <person name="Narusaka M."/>
            <person name="Seki M."/>
            <person name="Sakurai T."/>
            <person name="Satou M."/>
            <person name="Tamse R."/>
            <person name="Vaysberg M."/>
            <person name="Wallender E.K."/>
            <person name="Wong C."/>
            <person name="Yamamura Y."/>
            <person name="Yuan S."/>
            <person name="Shinozaki K."/>
            <person name="Davis R.W."/>
            <person name="Theologis A."/>
            <person name="Ecker J.R."/>
        </authorList>
    </citation>
    <scope>NUCLEOTIDE SEQUENCE [LARGE SCALE MRNA] OF 313-512</scope>
    <source>
        <strain>cv. Columbia</strain>
    </source>
</reference>
<reference key="4">
    <citation type="journal article" date="2003" name="DNA Res.">
        <title>Comprehensive analysis of NAC family genes in Oryza sativa and Arabidopsis thaliana.</title>
        <authorList>
            <person name="Ooka H."/>
            <person name="Satoh K."/>
            <person name="Doi K."/>
            <person name="Nagata T."/>
            <person name="Otomo Y."/>
            <person name="Murakami K."/>
            <person name="Matsubara K."/>
            <person name="Osato N."/>
            <person name="Kawai J."/>
            <person name="Carninci P."/>
            <person name="Hayashizaki Y."/>
            <person name="Suzuki K."/>
            <person name="Kojima K."/>
            <person name="Takahara Y."/>
            <person name="Yamamoto K."/>
            <person name="Kikuchi S."/>
        </authorList>
    </citation>
    <scope>GENE FAMILY</scope>
    <scope>NOMENCLATURE</scope>
</reference>
<reference key="5">
    <citation type="journal article" date="2007" name="J. Biol. Chem.">
        <title>Identification of a calmodulin-binding NAC protein as a transcriptional repressor in Arabidopsis.</title>
        <authorList>
            <person name="Kim H.S."/>
            <person name="Park B.O."/>
            <person name="Yoo J.H."/>
            <person name="Jung M.S."/>
            <person name="Lee S.M."/>
            <person name="Han H.J."/>
            <person name="Kim K.E."/>
            <person name="Kim S.H."/>
            <person name="Lim C.O."/>
            <person name="Yun D.J."/>
            <person name="Lee S.Y."/>
            <person name="Chung W.S."/>
        </authorList>
    </citation>
    <scope>FUNCTION</scope>
    <scope>INTERACTION WITH CALMODULIN</scope>
    <scope>SUBCELLULAR LOCATION</scope>
    <scope>MUTAGENESIS OF TRP-487; ALA-491 AND ALA-496</scope>
</reference>
<reference key="6">
    <citation type="journal article" date="2007" name="Nucleic Acids Res.">
        <title>Exploring membrane-associated NAC transcription factors in Arabidopsis: implications for membrane biology in genome regulation.</title>
        <authorList>
            <person name="Kim S.Y."/>
            <person name="Kim S.G."/>
            <person name="Kim Y.S."/>
            <person name="Seo P.J."/>
            <person name="Bae M."/>
            <person name="Yoon H.K."/>
            <person name="Park C.M."/>
        </authorList>
    </citation>
    <scope>GENE FAMILY</scope>
    <scope>NOMENCLATURE</scope>
    <scope>TISSUE SPECIFICITY</scope>
</reference>
<reference key="7">
    <citation type="journal article" date="2008" name="Mol. Cells">
        <title>Regulation of leaf senescence by NTL9-mediated osmotic stress signaling in Arabidopsis.</title>
        <authorList>
            <person name="Yoon H.K."/>
            <person name="Kim S.G."/>
            <person name="Kim S.Y."/>
            <person name="Park C.M."/>
        </authorList>
    </citation>
    <scope>FUNCTION</scope>
    <scope>SUBCELLULAR LOCATION</scope>
    <scope>TISSUE SPECIFICITY</scope>
    <scope>DEVELOPMENTAL STAGE</scope>
    <scope>DISRUPTION PHENOTYPE</scope>
</reference>
<reference key="8">
    <citation type="journal article" date="2012" name="Nucleic Acids Res.">
        <title>A NAC transcription factor and SNI1 cooperatively suppress basal pathogen resistance in Arabidopsis thaliana.</title>
        <authorList>
            <person name="Kim H.S."/>
            <person name="Park H.C."/>
            <person name="Kim K.E."/>
            <person name="Jung M.S."/>
            <person name="Han H.J."/>
            <person name="Kim S.H."/>
            <person name="Kwon Y.S."/>
            <person name="Bahk S."/>
            <person name="An J."/>
            <person name="Bae D.W."/>
            <person name="Yun D.-J."/>
            <person name="Kwak S.-S."/>
            <person name="Chung W.S."/>
        </authorList>
    </citation>
    <scope>FUNCTION</scope>
    <scope>INTERACTION WITH SNI1</scope>
    <scope>DISRUPTION PHENOTYPE</scope>
</reference>
<reference key="9">
    <citation type="journal article" date="2014" name="New Phytol.">
        <title>The Pseudomonas syringae type III effector HopD1 suppresses effector-triggered immunity, localizes to the endoplasmic reticulum, and targets the Arabidopsis transcription factor NTL9.</title>
        <authorList>
            <person name="Block A."/>
            <person name="Toruno T.Y."/>
            <person name="Elowsky C.G."/>
            <person name="Zhang C."/>
            <person name="Steinbrenner J."/>
            <person name="Beynon J."/>
            <person name="Alfano J.R."/>
        </authorList>
    </citation>
    <scope>FUNCTION</scope>
    <scope>SUBCELLULAR LOCATION</scope>
</reference>
<organism>
    <name type="scientific">Arabidopsis thaliana</name>
    <name type="common">Mouse-ear cress</name>
    <dbReference type="NCBI Taxonomy" id="3702"/>
    <lineage>
        <taxon>Eukaryota</taxon>
        <taxon>Viridiplantae</taxon>
        <taxon>Streptophyta</taxon>
        <taxon>Embryophyta</taxon>
        <taxon>Tracheophyta</taxon>
        <taxon>Spermatophyta</taxon>
        <taxon>Magnoliopsida</taxon>
        <taxon>eudicotyledons</taxon>
        <taxon>Gunneridae</taxon>
        <taxon>Pentapetalae</taxon>
        <taxon>rosids</taxon>
        <taxon>malvids</taxon>
        <taxon>Brassicales</taxon>
        <taxon>Brassicaceae</taxon>
        <taxon>Camelineae</taxon>
        <taxon>Arabidopsis</taxon>
    </lineage>
</organism>
<name>NTL9_ARATH</name>